<keyword id="KW-0472">Membrane</keyword>
<keyword id="KW-0520">NAD</keyword>
<keyword id="KW-0521">NADP</keyword>
<keyword id="KW-0618">Plastoquinone</keyword>
<keyword id="KW-0874">Quinone</keyword>
<keyword id="KW-0793">Thylakoid</keyword>
<keyword id="KW-1278">Translocase</keyword>
<keyword id="KW-0812">Transmembrane</keyword>
<keyword id="KW-1133">Transmembrane helix</keyword>
<name>NU1C_CYAP4</name>
<organism>
    <name type="scientific">Cyanothece sp. (strain PCC 7425 / ATCC 29141)</name>
    <dbReference type="NCBI Taxonomy" id="395961"/>
    <lineage>
        <taxon>Bacteria</taxon>
        <taxon>Bacillati</taxon>
        <taxon>Cyanobacteriota</taxon>
        <taxon>Cyanophyceae</taxon>
        <taxon>Gomontiellales</taxon>
        <taxon>Cyanothecaceae</taxon>
        <taxon>Cyanothece</taxon>
    </lineage>
</organism>
<accession>B8HQP5</accession>
<dbReference type="EC" id="7.1.1.-" evidence="1"/>
<dbReference type="EMBL" id="CP001344">
    <property type="protein sequence ID" value="ACL44035.1"/>
    <property type="molecule type" value="Genomic_DNA"/>
</dbReference>
<dbReference type="SMR" id="B8HQP5"/>
<dbReference type="STRING" id="395961.Cyan7425_1666"/>
<dbReference type="KEGG" id="cyn:Cyan7425_1666"/>
<dbReference type="eggNOG" id="COG1005">
    <property type="taxonomic scope" value="Bacteria"/>
</dbReference>
<dbReference type="HOGENOM" id="CLU_015134_0_1_3"/>
<dbReference type="OrthoDB" id="9803734at2"/>
<dbReference type="GO" id="GO:0031676">
    <property type="term" value="C:plasma membrane-derived thylakoid membrane"/>
    <property type="evidence" value="ECO:0007669"/>
    <property type="project" value="UniProtKB-SubCell"/>
</dbReference>
<dbReference type="GO" id="GO:0003954">
    <property type="term" value="F:NADH dehydrogenase activity"/>
    <property type="evidence" value="ECO:0007669"/>
    <property type="project" value="TreeGrafter"/>
</dbReference>
<dbReference type="GO" id="GO:0016655">
    <property type="term" value="F:oxidoreductase activity, acting on NAD(P)H, quinone or similar compound as acceptor"/>
    <property type="evidence" value="ECO:0007669"/>
    <property type="project" value="UniProtKB-UniRule"/>
</dbReference>
<dbReference type="GO" id="GO:0048038">
    <property type="term" value="F:quinone binding"/>
    <property type="evidence" value="ECO:0007669"/>
    <property type="project" value="UniProtKB-KW"/>
</dbReference>
<dbReference type="GO" id="GO:0009060">
    <property type="term" value="P:aerobic respiration"/>
    <property type="evidence" value="ECO:0007669"/>
    <property type="project" value="TreeGrafter"/>
</dbReference>
<dbReference type="GO" id="GO:0019684">
    <property type="term" value="P:photosynthesis, light reaction"/>
    <property type="evidence" value="ECO:0007669"/>
    <property type="project" value="UniProtKB-UniRule"/>
</dbReference>
<dbReference type="HAMAP" id="MF_01350">
    <property type="entry name" value="NDH1_NuoH"/>
    <property type="match status" value="1"/>
</dbReference>
<dbReference type="InterPro" id="IPR001694">
    <property type="entry name" value="NADH_UbQ_OxRdtase_su1/FPO"/>
</dbReference>
<dbReference type="InterPro" id="IPR018086">
    <property type="entry name" value="NADH_UbQ_OxRdtase_su1_CS"/>
</dbReference>
<dbReference type="NCBIfam" id="NF004741">
    <property type="entry name" value="PRK06076.1-2"/>
    <property type="match status" value="1"/>
</dbReference>
<dbReference type="NCBIfam" id="NF004744">
    <property type="entry name" value="PRK06076.1-5"/>
    <property type="match status" value="1"/>
</dbReference>
<dbReference type="PANTHER" id="PTHR11432">
    <property type="entry name" value="NADH DEHYDROGENASE SUBUNIT 1"/>
    <property type="match status" value="1"/>
</dbReference>
<dbReference type="PANTHER" id="PTHR11432:SF3">
    <property type="entry name" value="NADH-UBIQUINONE OXIDOREDUCTASE CHAIN 1"/>
    <property type="match status" value="1"/>
</dbReference>
<dbReference type="Pfam" id="PF00146">
    <property type="entry name" value="NADHdh"/>
    <property type="match status" value="1"/>
</dbReference>
<dbReference type="PROSITE" id="PS00667">
    <property type="entry name" value="COMPLEX1_ND1_1"/>
    <property type="match status" value="1"/>
</dbReference>
<dbReference type="PROSITE" id="PS00668">
    <property type="entry name" value="COMPLEX1_ND1_2"/>
    <property type="match status" value="1"/>
</dbReference>
<evidence type="ECO:0000255" key="1">
    <source>
        <dbReference type="HAMAP-Rule" id="MF_01350"/>
    </source>
</evidence>
<sequence length="372" mass="39997">MNPGIDLQGSFIELLTNVGLPPGVAKAVWMPLPMLLMLVGATIGVLISVWLERKISAAAQQRIGPEYIGPLGVLAPVADGLKLLFKEDIVPANADAALFTLGPILVVIPVFLSYLIVPFGQNLLISDLGIGVFLWISLSSIAPIGLLMAGYASNNKYSLLGGLRAAAQSISYEIPLALAVLAIAMMSNSLSTVDIVNQQSGLGILGWNVWRQPVGLILFWIAALAECERLPFDLPEAEEELVAGYQTEYAGMKFALFYLGSYVNLVLSALMVAILYLGGWDFPIPLNLVASWVGVSETNALFQVIAGAVGITMVLLKAYFFIFLAILLRWTVPRVRIDQLLDLGWKFLLPVGLVNLLLTAGLKLTFPIAFGG</sequence>
<proteinExistence type="inferred from homology"/>
<protein>
    <recommendedName>
        <fullName evidence="1">NAD(P)H-quinone oxidoreductase subunit 1</fullName>
        <ecNumber evidence="1">7.1.1.-</ecNumber>
    </recommendedName>
    <alternativeName>
        <fullName evidence="1">NAD(P)H dehydrogenase I subunit 1</fullName>
    </alternativeName>
    <alternativeName>
        <fullName evidence="1">NDH-1 subunit 1</fullName>
    </alternativeName>
    <alternativeName>
        <fullName evidence="1">NDH-A</fullName>
    </alternativeName>
</protein>
<reference key="1">
    <citation type="journal article" date="2011" name="MBio">
        <title>Novel metabolic attributes of the genus Cyanothece, comprising a group of unicellular nitrogen-fixing Cyanobacteria.</title>
        <authorList>
            <person name="Bandyopadhyay A."/>
            <person name="Elvitigala T."/>
            <person name="Welsh E."/>
            <person name="Stockel J."/>
            <person name="Liberton M."/>
            <person name="Min H."/>
            <person name="Sherman L.A."/>
            <person name="Pakrasi H.B."/>
        </authorList>
    </citation>
    <scope>NUCLEOTIDE SEQUENCE [LARGE SCALE GENOMIC DNA]</scope>
    <source>
        <strain>PCC 7425 / ATCC 29141</strain>
    </source>
</reference>
<gene>
    <name evidence="1" type="primary">ndhA</name>
    <name type="ordered locus">Cyan7425_1666</name>
</gene>
<feature type="chain" id="PRO_1000166626" description="NAD(P)H-quinone oxidoreductase subunit 1">
    <location>
        <begin position="1"/>
        <end position="372"/>
    </location>
</feature>
<feature type="transmembrane region" description="Helical" evidence="1">
    <location>
        <begin position="27"/>
        <end position="47"/>
    </location>
</feature>
<feature type="transmembrane region" description="Helical" evidence="1">
    <location>
        <begin position="97"/>
        <end position="117"/>
    </location>
</feature>
<feature type="transmembrane region" description="Helical" evidence="1">
    <location>
        <begin position="128"/>
        <end position="148"/>
    </location>
</feature>
<feature type="transmembrane region" description="Helical" evidence="1">
    <location>
        <begin position="166"/>
        <end position="186"/>
    </location>
</feature>
<feature type="transmembrane region" description="Helical" evidence="1">
    <location>
        <begin position="204"/>
        <end position="224"/>
    </location>
</feature>
<feature type="transmembrane region" description="Helical" evidence="1">
    <location>
        <begin position="254"/>
        <end position="274"/>
    </location>
</feature>
<feature type="transmembrane region" description="Helical" evidence="1">
    <location>
        <begin position="308"/>
        <end position="328"/>
    </location>
</feature>
<feature type="transmembrane region" description="Helical" evidence="1">
    <location>
        <begin position="351"/>
        <end position="371"/>
    </location>
</feature>
<comment type="function">
    <text evidence="1">NDH-1 shuttles electrons from an unknown electron donor, via FMN and iron-sulfur (Fe-S) centers, to quinones in the respiratory and/or the photosynthetic chain. The immediate electron acceptor for the enzyme in this species is believed to be plastoquinone. Couples the redox reaction to proton translocation, and thus conserves the redox energy in a proton gradient.</text>
</comment>
<comment type="catalytic activity">
    <reaction evidence="1">
        <text>a plastoquinone + NADH + (n+1) H(+)(in) = a plastoquinol + NAD(+) + n H(+)(out)</text>
        <dbReference type="Rhea" id="RHEA:42608"/>
        <dbReference type="Rhea" id="RHEA-COMP:9561"/>
        <dbReference type="Rhea" id="RHEA-COMP:9562"/>
        <dbReference type="ChEBI" id="CHEBI:15378"/>
        <dbReference type="ChEBI" id="CHEBI:17757"/>
        <dbReference type="ChEBI" id="CHEBI:57540"/>
        <dbReference type="ChEBI" id="CHEBI:57945"/>
        <dbReference type="ChEBI" id="CHEBI:62192"/>
    </reaction>
</comment>
<comment type="catalytic activity">
    <reaction evidence="1">
        <text>a plastoquinone + NADPH + (n+1) H(+)(in) = a plastoquinol + NADP(+) + n H(+)(out)</text>
        <dbReference type="Rhea" id="RHEA:42612"/>
        <dbReference type="Rhea" id="RHEA-COMP:9561"/>
        <dbReference type="Rhea" id="RHEA-COMP:9562"/>
        <dbReference type="ChEBI" id="CHEBI:15378"/>
        <dbReference type="ChEBI" id="CHEBI:17757"/>
        <dbReference type="ChEBI" id="CHEBI:57783"/>
        <dbReference type="ChEBI" id="CHEBI:58349"/>
        <dbReference type="ChEBI" id="CHEBI:62192"/>
    </reaction>
</comment>
<comment type="subunit">
    <text evidence="1">NDH-1 is composed of at least 11 different subunits.</text>
</comment>
<comment type="subcellular location">
    <subcellularLocation>
        <location evidence="1">Cellular thylakoid membrane</location>
        <topology evidence="1">Multi-pass membrane protein</topology>
    </subcellularLocation>
</comment>
<comment type="similarity">
    <text evidence="1">Belongs to the complex I subunit 1 family.</text>
</comment>